<gene>
    <name evidence="4" type="primary">Qser1</name>
</gene>
<keyword id="KW-0025">Alternative splicing</keyword>
<keyword id="KW-0158">Chromosome</keyword>
<keyword id="KW-1017">Isopeptide bond</keyword>
<keyword id="KW-0597">Phosphoprotein</keyword>
<keyword id="KW-1185">Reference proteome</keyword>
<keyword id="KW-0832">Ubl conjugation</keyword>
<dbReference type="EMBL" id="AK141733">
    <property type="protein sequence ID" value="BAE24813.1"/>
    <property type="molecule type" value="mRNA"/>
</dbReference>
<dbReference type="CCDS" id="CCDS50653.1">
    <molecule id="A0A338P6K9-1"/>
</dbReference>
<dbReference type="RefSeq" id="NP_001116799.2">
    <molecule id="A0A338P6K9-1"/>
    <property type="nucleotide sequence ID" value="NM_001123327.3"/>
</dbReference>
<dbReference type="RefSeq" id="XP_006500521.1">
    <property type="nucleotide sequence ID" value="XM_006500458.2"/>
</dbReference>
<dbReference type="FunCoup" id="A0A338P6K9">
    <property type="interactions" value="554"/>
</dbReference>
<dbReference type="IntAct" id="A0A338P6K9">
    <property type="interactions" value="2"/>
</dbReference>
<dbReference type="MINT" id="A0A338P6K9"/>
<dbReference type="STRING" id="10090.ENSMUSP00000114062"/>
<dbReference type="GlyGen" id="A0A338P6K9">
    <property type="glycosylation" value="4 sites"/>
</dbReference>
<dbReference type="iPTMnet" id="A0A338P6K9"/>
<dbReference type="PhosphoSitePlus" id="A0A338P6K9"/>
<dbReference type="jPOST" id="A0A338P6K9"/>
<dbReference type="PaxDb" id="10090-ENSMUSP00000114062"/>
<dbReference type="ProteomicsDB" id="349126"/>
<dbReference type="Antibodypedia" id="1555">
    <property type="antibodies" value="69 antibodies from 20 providers"/>
</dbReference>
<dbReference type="Ensembl" id="ENSMUST00000117237.2">
    <molecule id="A0A338P6K9-2"/>
    <property type="protein sequence ID" value="ENSMUSP00000114062.2"/>
    <property type="gene ID" value="ENSMUSG00000074994.7"/>
</dbReference>
<dbReference type="Ensembl" id="ENSMUST00000231375.2">
    <molecule id="A0A338P6K9-1"/>
    <property type="protein sequence ID" value="ENSMUSP00000155882.2"/>
    <property type="gene ID" value="ENSMUSG00000074994.7"/>
</dbReference>
<dbReference type="GeneID" id="99003"/>
<dbReference type="KEGG" id="mmu:99003"/>
<dbReference type="UCSC" id="uc008lkg.3">
    <property type="organism name" value="mouse"/>
</dbReference>
<dbReference type="AGR" id="MGI:2138986"/>
<dbReference type="CTD" id="79832"/>
<dbReference type="MGI" id="MGI:2138986">
    <property type="gene designation" value="Qser1"/>
</dbReference>
<dbReference type="VEuPathDB" id="HostDB:ENSMUSG00000074994"/>
<dbReference type="eggNOG" id="KOG4805">
    <property type="taxonomic scope" value="Eukaryota"/>
</dbReference>
<dbReference type="GeneTree" id="ENSGT00440000037417"/>
<dbReference type="HOGENOM" id="CLU_000708_2_0_1"/>
<dbReference type="InParanoid" id="A0A338P6K9"/>
<dbReference type="OMA" id="QPYNGTT"/>
<dbReference type="OrthoDB" id="8447576at2759"/>
<dbReference type="TreeFam" id="TF333141"/>
<dbReference type="BioGRID-ORCS" id="99003">
    <property type="hits" value="1 hit in 76 CRISPR screens"/>
</dbReference>
<dbReference type="ChiTaRS" id="Qser1">
    <property type="organism name" value="mouse"/>
</dbReference>
<dbReference type="PRO" id="PR:A0A338P6K9"/>
<dbReference type="Proteomes" id="UP000000589">
    <property type="component" value="Chromosome 2"/>
</dbReference>
<dbReference type="Bgee" id="ENSMUSG00000074994">
    <property type="expression patterns" value="Expressed in external carotid artery and 249 other cell types or tissues"/>
</dbReference>
<dbReference type="ExpressionAtlas" id="A0A338P6K9">
    <property type="expression patterns" value="baseline and differential"/>
</dbReference>
<dbReference type="GO" id="GO:0005694">
    <property type="term" value="C:chromosome"/>
    <property type="evidence" value="ECO:0007669"/>
    <property type="project" value="UniProtKB-SubCell"/>
</dbReference>
<dbReference type="InterPro" id="IPR052466">
    <property type="entry name" value="DNA_MethProtect_Complex"/>
</dbReference>
<dbReference type="InterPro" id="IPR025451">
    <property type="entry name" value="DUF4211"/>
</dbReference>
<dbReference type="PANTHER" id="PTHR14709:SF2">
    <property type="entry name" value="GLUTAMINE AND SERINE-RICH PROTEIN 1"/>
    <property type="match status" value="1"/>
</dbReference>
<dbReference type="PANTHER" id="PTHR14709">
    <property type="entry name" value="GLUTAMINE AND SERINE-RICH PROTEIN 1-RELATED"/>
    <property type="match status" value="1"/>
</dbReference>
<dbReference type="Pfam" id="PF13926">
    <property type="entry name" value="DUF4211"/>
    <property type="match status" value="1"/>
</dbReference>
<reference key="1">
    <citation type="journal article" date="2009" name="PLoS Biol.">
        <title>Lineage-specific biology revealed by a finished genome assembly of the mouse.</title>
        <authorList>
            <person name="Church D.M."/>
            <person name="Goodstadt L."/>
            <person name="Hillier L.W."/>
            <person name="Zody M.C."/>
            <person name="Goldstein S."/>
            <person name="She X."/>
            <person name="Bult C.J."/>
            <person name="Agarwala R."/>
            <person name="Cherry J.L."/>
            <person name="DiCuccio M."/>
            <person name="Hlavina W."/>
            <person name="Kapustin Y."/>
            <person name="Meric P."/>
            <person name="Maglott D."/>
            <person name="Birtle Z."/>
            <person name="Marques A.C."/>
            <person name="Graves T."/>
            <person name="Zhou S."/>
            <person name="Teague B."/>
            <person name="Potamousis K."/>
            <person name="Churas C."/>
            <person name="Place M."/>
            <person name="Herschleb J."/>
            <person name="Runnheim R."/>
            <person name="Forrest D."/>
            <person name="Amos-Landgraf J."/>
            <person name="Schwartz D.C."/>
            <person name="Cheng Z."/>
            <person name="Lindblad-Toh K."/>
            <person name="Eichler E.E."/>
            <person name="Ponting C.P."/>
        </authorList>
    </citation>
    <scope>NUCLEOTIDE SEQUENCE [LARGE SCALE GENOMIC DNA]</scope>
    <source>
        <strain>C57BL/6J</strain>
    </source>
</reference>
<reference key="2">
    <citation type="journal article" date="2005" name="Science">
        <title>The transcriptional landscape of the mammalian genome.</title>
        <authorList>
            <person name="Carninci P."/>
            <person name="Kasukawa T."/>
            <person name="Katayama S."/>
            <person name="Gough J."/>
            <person name="Frith M.C."/>
            <person name="Maeda N."/>
            <person name="Oyama R."/>
            <person name="Ravasi T."/>
            <person name="Lenhard B."/>
            <person name="Wells C."/>
            <person name="Kodzius R."/>
            <person name="Shimokawa K."/>
            <person name="Bajic V.B."/>
            <person name="Brenner S.E."/>
            <person name="Batalov S."/>
            <person name="Forrest A.R."/>
            <person name="Zavolan M."/>
            <person name="Davis M.J."/>
            <person name="Wilming L.G."/>
            <person name="Aidinis V."/>
            <person name="Allen J.E."/>
            <person name="Ambesi-Impiombato A."/>
            <person name="Apweiler R."/>
            <person name="Aturaliya R.N."/>
            <person name="Bailey T.L."/>
            <person name="Bansal M."/>
            <person name="Baxter L."/>
            <person name="Beisel K.W."/>
            <person name="Bersano T."/>
            <person name="Bono H."/>
            <person name="Chalk A.M."/>
            <person name="Chiu K.P."/>
            <person name="Choudhary V."/>
            <person name="Christoffels A."/>
            <person name="Clutterbuck D.R."/>
            <person name="Crowe M.L."/>
            <person name="Dalla E."/>
            <person name="Dalrymple B.P."/>
            <person name="de Bono B."/>
            <person name="Della Gatta G."/>
            <person name="di Bernardo D."/>
            <person name="Down T."/>
            <person name="Engstrom P."/>
            <person name="Fagiolini M."/>
            <person name="Faulkner G."/>
            <person name="Fletcher C.F."/>
            <person name="Fukushima T."/>
            <person name="Furuno M."/>
            <person name="Futaki S."/>
            <person name="Gariboldi M."/>
            <person name="Georgii-Hemming P."/>
            <person name="Gingeras T.R."/>
            <person name="Gojobori T."/>
            <person name="Green R.E."/>
            <person name="Gustincich S."/>
            <person name="Harbers M."/>
            <person name="Hayashi Y."/>
            <person name="Hensch T.K."/>
            <person name="Hirokawa N."/>
            <person name="Hill D."/>
            <person name="Huminiecki L."/>
            <person name="Iacono M."/>
            <person name="Ikeo K."/>
            <person name="Iwama A."/>
            <person name="Ishikawa T."/>
            <person name="Jakt M."/>
            <person name="Kanapin A."/>
            <person name="Katoh M."/>
            <person name="Kawasawa Y."/>
            <person name="Kelso J."/>
            <person name="Kitamura H."/>
            <person name="Kitano H."/>
            <person name="Kollias G."/>
            <person name="Krishnan S.P."/>
            <person name="Kruger A."/>
            <person name="Kummerfeld S.K."/>
            <person name="Kurochkin I.V."/>
            <person name="Lareau L.F."/>
            <person name="Lazarevic D."/>
            <person name="Lipovich L."/>
            <person name="Liu J."/>
            <person name="Liuni S."/>
            <person name="McWilliam S."/>
            <person name="Madan Babu M."/>
            <person name="Madera M."/>
            <person name="Marchionni L."/>
            <person name="Matsuda H."/>
            <person name="Matsuzawa S."/>
            <person name="Miki H."/>
            <person name="Mignone F."/>
            <person name="Miyake S."/>
            <person name="Morris K."/>
            <person name="Mottagui-Tabar S."/>
            <person name="Mulder N."/>
            <person name="Nakano N."/>
            <person name="Nakauchi H."/>
            <person name="Ng P."/>
            <person name="Nilsson R."/>
            <person name="Nishiguchi S."/>
            <person name="Nishikawa S."/>
            <person name="Nori F."/>
            <person name="Ohara O."/>
            <person name="Okazaki Y."/>
            <person name="Orlando V."/>
            <person name="Pang K.C."/>
            <person name="Pavan W.J."/>
            <person name="Pavesi G."/>
            <person name="Pesole G."/>
            <person name="Petrovsky N."/>
            <person name="Piazza S."/>
            <person name="Reed J."/>
            <person name="Reid J.F."/>
            <person name="Ring B.Z."/>
            <person name="Ringwald M."/>
            <person name="Rost B."/>
            <person name="Ruan Y."/>
            <person name="Salzberg S.L."/>
            <person name="Sandelin A."/>
            <person name="Schneider C."/>
            <person name="Schoenbach C."/>
            <person name="Sekiguchi K."/>
            <person name="Semple C.A."/>
            <person name="Seno S."/>
            <person name="Sessa L."/>
            <person name="Sheng Y."/>
            <person name="Shibata Y."/>
            <person name="Shimada H."/>
            <person name="Shimada K."/>
            <person name="Silva D."/>
            <person name="Sinclair B."/>
            <person name="Sperling S."/>
            <person name="Stupka E."/>
            <person name="Sugiura K."/>
            <person name="Sultana R."/>
            <person name="Takenaka Y."/>
            <person name="Taki K."/>
            <person name="Tammoja K."/>
            <person name="Tan S.L."/>
            <person name="Tang S."/>
            <person name="Taylor M.S."/>
            <person name="Tegner J."/>
            <person name="Teichmann S.A."/>
            <person name="Ueda H.R."/>
            <person name="van Nimwegen E."/>
            <person name="Verardo R."/>
            <person name="Wei C.L."/>
            <person name="Yagi K."/>
            <person name="Yamanishi H."/>
            <person name="Zabarovsky E."/>
            <person name="Zhu S."/>
            <person name="Zimmer A."/>
            <person name="Hide W."/>
            <person name="Bult C."/>
            <person name="Grimmond S.M."/>
            <person name="Teasdale R.D."/>
            <person name="Liu E.T."/>
            <person name="Brusic V."/>
            <person name="Quackenbush J."/>
            <person name="Wahlestedt C."/>
            <person name="Mattick J.S."/>
            <person name="Hume D.A."/>
            <person name="Kai C."/>
            <person name="Sasaki D."/>
            <person name="Tomaru Y."/>
            <person name="Fukuda S."/>
            <person name="Kanamori-Katayama M."/>
            <person name="Suzuki M."/>
            <person name="Aoki J."/>
            <person name="Arakawa T."/>
            <person name="Iida J."/>
            <person name="Imamura K."/>
            <person name="Itoh M."/>
            <person name="Kato T."/>
            <person name="Kawaji H."/>
            <person name="Kawagashira N."/>
            <person name="Kawashima T."/>
            <person name="Kojima M."/>
            <person name="Kondo S."/>
            <person name="Konno H."/>
            <person name="Nakano K."/>
            <person name="Ninomiya N."/>
            <person name="Nishio T."/>
            <person name="Okada M."/>
            <person name="Plessy C."/>
            <person name="Shibata K."/>
            <person name="Shiraki T."/>
            <person name="Suzuki S."/>
            <person name="Tagami M."/>
            <person name="Waki K."/>
            <person name="Watahiki A."/>
            <person name="Okamura-Oho Y."/>
            <person name="Suzuki H."/>
            <person name="Kawai J."/>
            <person name="Hayashizaki Y."/>
        </authorList>
    </citation>
    <scope>NUCLEOTIDE SEQUENCE [LARGE SCALE MRNA] OF 586-1788</scope>
    <source>
        <strain>C57BL/6J</strain>
    </source>
</reference>
<comment type="function">
    <text evidence="1">Plays an essential role in the protection and maintenance of transcriptional and developmental programs. Protects many bivalent promoters and poised enhancers from hypermethylation, showing a marked preference for these regulatory elements over other types of promoters or enhancers. Mechanistically, cooperates with TET1 and binds to DNA in a common complex to inhibit the binding of DNMT3A/3B and therefore de novo methylation.</text>
</comment>
<comment type="subunit">
    <text evidence="1">Interacts with TET1.</text>
</comment>
<comment type="subcellular location">
    <subcellularLocation>
        <location evidence="1">Chromosome</location>
    </subcellularLocation>
</comment>
<comment type="alternative products">
    <event type="alternative splicing"/>
    <isoform>
        <id>A0A338P6K9-1</id>
        <name>1</name>
        <sequence type="displayed"/>
    </isoform>
    <isoform>
        <id>A0A338P6K9-2</id>
        <name>2</name>
        <sequence type="described" ref="VSP_061204"/>
    </isoform>
</comment>
<organism>
    <name type="scientific">Mus musculus</name>
    <name type="common">Mouse</name>
    <dbReference type="NCBI Taxonomy" id="10090"/>
    <lineage>
        <taxon>Eukaryota</taxon>
        <taxon>Metazoa</taxon>
        <taxon>Chordata</taxon>
        <taxon>Craniata</taxon>
        <taxon>Vertebrata</taxon>
        <taxon>Euteleostomi</taxon>
        <taxon>Mammalia</taxon>
        <taxon>Eutheria</taxon>
        <taxon>Euarchontoglires</taxon>
        <taxon>Glires</taxon>
        <taxon>Rodentia</taxon>
        <taxon>Myomorpha</taxon>
        <taxon>Muroidea</taxon>
        <taxon>Muridae</taxon>
        <taxon>Murinae</taxon>
        <taxon>Mus</taxon>
        <taxon>Mus</taxon>
    </lineage>
</organism>
<evidence type="ECO:0000250" key="1">
    <source>
        <dbReference type="UniProtKB" id="Q2KHR3"/>
    </source>
</evidence>
<evidence type="ECO:0000256" key="2">
    <source>
        <dbReference type="SAM" id="MobiDB-lite"/>
    </source>
</evidence>
<evidence type="ECO:0000305" key="3"/>
<evidence type="ECO:0000312" key="4">
    <source>
        <dbReference type="MGI" id="MGI:2138986"/>
    </source>
</evidence>
<name>QSER1_MOUSE</name>
<protein>
    <recommendedName>
        <fullName evidence="3">Glutamine and serine-rich protein 1</fullName>
    </recommendedName>
</protein>
<feature type="chain" id="PRO_0000453804" description="Glutamine and serine-rich protein 1">
    <location>
        <begin position="1"/>
        <end position="1788"/>
    </location>
</feature>
<feature type="region of interest" description="Disordered" evidence="2">
    <location>
        <begin position="1"/>
        <end position="69"/>
    </location>
</feature>
<feature type="region of interest" description="Disordered" evidence="2">
    <location>
        <begin position="472"/>
        <end position="498"/>
    </location>
</feature>
<feature type="region of interest" description="Disordered" evidence="2">
    <location>
        <begin position="532"/>
        <end position="617"/>
    </location>
</feature>
<feature type="region of interest" description="Disordered" evidence="2">
    <location>
        <begin position="1104"/>
        <end position="1163"/>
    </location>
</feature>
<feature type="region of interest" description="Disordered" evidence="2">
    <location>
        <begin position="1234"/>
        <end position="1264"/>
    </location>
</feature>
<feature type="region of interest" description="Disordered" evidence="2">
    <location>
        <begin position="1494"/>
        <end position="1588"/>
    </location>
</feature>
<feature type="compositionally biased region" description="Low complexity" evidence="2">
    <location>
        <begin position="1"/>
        <end position="53"/>
    </location>
</feature>
<feature type="compositionally biased region" description="Polar residues" evidence="2">
    <location>
        <begin position="60"/>
        <end position="69"/>
    </location>
</feature>
<feature type="compositionally biased region" description="Polar residues" evidence="2">
    <location>
        <begin position="478"/>
        <end position="492"/>
    </location>
</feature>
<feature type="compositionally biased region" description="Polar residues" evidence="2">
    <location>
        <begin position="532"/>
        <end position="569"/>
    </location>
</feature>
<feature type="compositionally biased region" description="Polar residues" evidence="2">
    <location>
        <begin position="576"/>
        <end position="594"/>
    </location>
</feature>
<feature type="compositionally biased region" description="Basic and acidic residues" evidence="2">
    <location>
        <begin position="1126"/>
        <end position="1136"/>
    </location>
</feature>
<feature type="compositionally biased region" description="Low complexity" evidence="2">
    <location>
        <begin position="1510"/>
        <end position="1537"/>
    </location>
</feature>
<feature type="compositionally biased region" description="Basic and acidic residues" evidence="2">
    <location>
        <begin position="1545"/>
        <end position="1561"/>
    </location>
</feature>
<feature type="compositionally biased region" description="Low complexity" evidence="2">
    <location>
        <begin position="1562"/>
        <end position="1575"/>
    </location>
</feature>
<feature type="modified residue" description="Phosphoserine" evidence="1">
    <location>
        <position position="670"/>
    </location>
</feature>
<feature type="modified residue" description="Phosphoserine" evidence="1">
    <location>
        <position position="940"/>
    </location>
</feature>
<feature type="modified residue" description="Phosphothreonine" evidence="1">
    <location>
        <position position="1003"/>
    </location>
</feature>
<feature type="modified residue" description="Phosphoserine" evidence="1">
    <location>
        <position position="1041"/>
    </location>
</feature>
<feature type="modified residue" description="Phosphoserine" evidence="1">
    <location>
        <position position="1262"/>
    </location>
</feature>
<feature type="modified residue" description="Phosphoserine" evidence="1">
    <location>
        <position position="1281"/>
    </location>
</feature>
<feature type="modified residue" description="Phosphoserine" evidence="1">
    <location>
        <position position="1282"/>
    </location>
</feature>
<feature type="modified residue" description="Phosphothreonine" evidence="1">
    <location>
        <position position="1394"/>
    </location>
</feature>
<feature type="modified residue" description="Phosphoserine" evidence="1">
    <location>
        <position position="1401"/>
    </location>
</feature>
<feature type="cross-link" description="Glycyl lysine isopeptide (Lys-Gly) (interchain with G-Cter in SUMO2)" evidence="1">
    <location>
        <position position="1112"/>
    </location>
</feature>
<feature type="cross-link" description="Glycyl lysine isopeptide (Lys-Gly) (interchain with G-Cter in SUMO2)" evidence="1">
    <location>
        <position position="1137"/>
    </location>
</feature>
<feature type="splice variant" id="VSP_061204" description="In isoform 2.">
    <location>
        <begin position="1"/>
        <end position="90"/>
    </location>
</feature>
<feature type="sequence conflict" description="In Ref. 2; BAE24813." evidence="3" ref="2">
    <original>Y</original>
    <variation>C</variation>
    <location>
        <position position="601"/>
    </location>
</feature>
<feature type="sequence conflict" description="In Ref. 2; BAE24813." evidence="3" ref="2">
    <original>E</original>
    <variation>G</variation>
    <location>
        <position position="1397"/>
    </location>
</feature>
<feature type="sequence conflict" description="In Ref. 2; BAE24813." evidence="3" ref="2">
    <original>C</original>
    <variation>F</variation>
    <location>
        <position position="1787"/>
    </location>
</feature>
<proteinExistence type="evidence at transcript level"/>
<accession>A0A338P6K9</accession>
<accession>A2BIE1</accession>
<accession>Q3UR75</accession>
<sequence>MDAHYAPAGFAEPPAPPASAATQPAAPAWAYEARVPAAASSPSCSGSSPSLKASYEDGHPSQSESDVLQRQTFTASHQLPGYATTPQATGMHSSAATELFVAGPLPTTGTLPPPTLSAYQHSSTFSNRNFATTSPLVLQDSSFNTTSNGILSPHDPLLQIKTSQGTVPTALAFERLGSSALSNSVPPQSSTYRSAQESAPHLLQPQFSLLPSTLGGAQQTPQAYNSALFPSSAASIERALLRECSVIKHHQRPSVTQSIQAQLTGSQHPLHSYLSSASIGNFQEPSRQSSLSCSSVRDSTQVSNGVLPQKTPQVSAELAQSYSSVIPSSGYLPSATKVDSCSTKQPLTSTTIPKPQSVIPPVQTLNYSKPLHNQSSVISGQAQIYSTAQLPSLLSVSQSQNYGLVQPHNVPSIVHSQVYRSSRVEKLPSLYKTLTFSGSSQPVTSENQTLSYSSNQQEVLSLVTNENYPAQTRDLPSVSESQNYSSGQSQGLSPVSQTQVSYSSQSQVLSVVSPSESYASGQSLTLTAPSLSYSSASRGQSLPVSTPTPSYTSMHPSPNAQTQGSSAQPQEFLPAVQSSFASSTRGQTLQSSIPSPDPKSYAERKLDSSVYTSSKQDEFPVQKLQALQSQASLESSSQRLPDGEVNAQESVYKTSKADDRYSQSVTRNNSHLEDQVVGVALQGSEQEENMVGSMTQLNQQSGQSNNAVATDLKKATNLMQTPQVRLNTKDLNQQHSLMHKMHEAKVQQQHDQIMSASSQIQIPNPALGQSHQALPHTSVLLDSACDLQILQQAGILQASLGQAKASLQVQRVQSPQQIVHPFLQMDGHIIQSNGEHPQQQLHPHNSDIMKLDLPEPSKPLQQLTTKGPFSEANPHDSKNQFVSLGSICFSEAMLLSDERNILSNVDDILAATAAACGVTPSDFSKSAANETMQDIESSDSKSHYQQSLNVRHVNSDFNSIAASVGKPQSINDISLNGNQVSVSLSSVPTLQSETVLDQPHMETPSQTIPTKVPSAMVGLGQEIQEQSSDPFKKQLTINHESKEDREIAVDSALSNNRNQEFVSNSRSISGDSVVSERDFTLVGDDTGVLVNPRRSTLALLAMPQPGDAASGKTEDEKQDVTYFNLPKEKAKGKEQGKEEEDNQKQLKRSAQCKRQNPRGTDVYVPYTSPSLESCDEGFQHQEKMRQKIKEVEEKQPEVKTGFIASFLDFLKCGPKQQFSTLAVRVPNRTRRSGIQTTRTFCPPPFAKTSPAAQAPSETGGVSLSEKVDSELKTLEQLSSFSSDEEDPGSCGHDIYKNTSAPLTVLDATSDKTKKTVLEALPVATPGASAETAGVAPTASTAVATIKQDLHLTSLTVNTMENANSTESPTAIELDSLPSDQLAKGQDTVAIEGFTDEENIESGGEGQYRERDEFVVKIEDIETFKEALNTGKEPPAIWKVQKALLQKFVPEIRDGQREFAATNSYLGYFGDAKTKYKRIYVKFIENANKKEYVRVCSKKPRNKPSQTIRNIPSKPSSISKTSDPPVSKTTTTKTPSTKPKAKQLKIKAEPPPKKRKKWKEEFSSSQSESSPEVRSSSSEDEGFEPPAPSVTRFLNTRAMKETFKSYMELLVSIALDPDTMQALEKSNDELLLPHMKKIDGMLNDNRKRLLVNLHLDQPFKNALESFPELTVITRDSKAKSGGSAISKIKMNGKAYNKKTLRTSKTTTKSAQEFAVDPEKIQLYSLYHSLHHYKYHVYLICKNEISSVQKKNEDLGQEEIVQLCMKNVKWVEDLFEKFGELLNHVQQKCS</sequence>